<gene>
    <name type="primary">PA</name>
</gene>
<proteinExistence type="inferred from homology"/>
<accession>P0DJT0</accession>
<name>PAX_I72A4</name>
<organismHost>
    <name type="scientific">Aves</name>
    <dbReference type="NCBI Taxonomy" id="8782"/>
</organismHost>
<organismHost>
    <name type="scientific">Cetacea</name>
    <name type="common">whales</name>
    <dbReference type="NCBI Taxonomy" id="9721"/>
</organismHost>
<organismHost>
    <name type="scientific">Homo sapiens</name>
    <name type="common">Human</name>
    <dbReference type="NCBI Taxonomy" id="9606"/>
</organismHost>
<organismHost>
    <name type="scientific">Phocidae</name>
    <name type="common">true seals</name>
    <dbReference type="NCBI Taxonomy" id="9709"/>
</organismHost>
<organismHost>
    <name type="scientific">Sus scrofa</name>
    <name type="common">Pig</name>
    <dbReference type="NCBI Taxonomy" id="9823"/>
</organismHost>
<reference key="1">
    <citation type="submission" date="2006-02" db="EMBL/GenBank/DDBJ databases">
        <title>The NIAID influenza genome sequencing project.</title>
        <authorList>
            <person name="Ghedin E."/>
            <person name="Spiro D."/>
            <person name="Miller N."/>
            <person name="Zaborsky J."/>
            <person name="Feldblyum T."/>
            <person name="Subbu V."/>
            <person name="Shumway M."/>
            <person name="Sparenborg J."/>
            <person name="Groveman L."/>
            <person name="Halpin R."/>
            <person name="Sitz J."/>
            <person name="Koo H."/>
            <person name="Salzberg S.L."/>
            <person name="Webster R.G."/>
            <person name="Hoffmann E."/>
            <person name="Krauss S."/>
            <person name="Naeve C."/>
            <person name="Bao Y."/>
            <person name="Bolotov P."/>
            <person name="Dernovoy D."/>
            <person name="Kiryutin B."/>
            <person name="Lipman D.J."/>
            <person name="Tatusova T."/>
        </authorList>
    </citation>
    <scope>NUCLEOTIDE SEQUENCE [GENOMIC RNA]</scope>
</reference>
<comment type="function">
    <text evidence="1 4">Plays a major role in the shutoff of the host protein expression by cleaving mRNAs probably via an endonuclease activity. This host shutoff allows the virus to escape from the host antiviral response (By similarity). Hijacks host RNA splicing machinery to selectively target host RNAs containing introns for destruction. This may explain the preferential degradation of RNAs that have undergone co- or post-transcriptional processing (By similarity).</text>
</comment>
<comment type="subcellular location">
    <subcellularLocation>
        <location evidence="4">Host cytoplasm</location>
    </subcellularLocation>
    <subcellularLocation>
        <location evidence="4">Host nucleus</location>
    </subcellularLocation>
</comment>
<comment type="alternative products">
    <event type="ribosomal frameshifting"/>
    <isoform>
        <id>P0DJT0-1</id>
        <name>PA-X</name>
        <sequence type="displayed"/>
    </isoform>
    <isoform>
        <id>Q2ICQ3-1</id>
        <name>PA</name>
        <sequence type="external"/>
    </isoform>
</comment>
<comment type="domain">
    <text evidence="1 4">The probable endonuclease active site in the N-terminus and the basic amino acid cluster in the C-terminus are important for the shutoff activity. The C-terminus acts as a nuclear localization signal (By similarity). The C-terminus is recruited to host protein complexes involved in nuclear Pol II RNA processing (By similarity).</text>
</comment>
<comment type="similarity">
    <text evidence="6">Belongs to the influenza viruses PA-X family.</text>
</comment>
<organism>
    <name type="scientific">Influenza A virus (strain A/Memphis/101/1972 H3N2)</name>
    <dbReference type="NCBI Taxonomy" id="383583"/>
    <lineage>
        <taxon>Viruses</taxon>
        <taxon>Riboviria</taxon>
        <taxon>Orthornavirae</taxon>
        <taxon>Negarnaviricota</taxon>
        <taxon>Polyploviricotina</taxon>
        <taxon>Insthoviricetes</taxon>
        <taxon>Articulavirales</taxon>
        <taxon>Orthomyxoviridae</taxon>
        <taxon>Alphainfluenzavirus</taxon>
        <taxon>Alphainfluenzavirus influenzae</taxon>
        <taxon>Influenza A virus</taxon>
    </lineage>
</organism>
<feature type="chain" id="PRO_0000419393" description="Protein PA-X">
    <location>
        <begin position="1"/>
        <end position="252"/>
    </location>
</feature>
<feature type="active site" evidence="2">
    <location>
        <position position="80"/>
    </location>
</feature>
<feature type="active site" evidence="2">
    <location>
        <position position="108"/>
    </location>
</feature>
<feature type="site" description="Important for efficient shutoff activity" evidence="5">
    <location>
        <position position="28"/>
    </location>
</feature>
<feature type="site" description="Important for efficient shutoff activity" evidence="5">
    <location>
        <position position="65"/>
    </location>
</feature>
<feature type="site" description="Important for efficient shutoff activity and nuclear localization" evidence="4">
    <location>
        <position position="195"/>
    </location>
</feature>
<feature type="site" description="Important for efficient shutoff activity and nuclear localization" evidence="4">
    <location>
        <position position="198"/>
    </location>
</feature>
<feature type="site" description="Important for efficient shutoff activity and nuclear localization" evidence="4">
    <location>
        <position position="199"/>
    </location>
</feature>
<feature type="site" description="Important for efficient shutoff activity" evidence="3">
    <location>
        <position position="202"/>
    </location>
</feature>
<feature type="site" description="Important for efficient shutoff activity" evidence="3">
    <location>
        <position position="203"/>
    </location>
</feature>
<feature type="site" description="Important for efficient shutoff activity" evidence="3">
    <location>
        <position position="206"/>
    </location>
</feature>
<evidence type="ECO:0000250" key="1">
    <source>
        <dbReference type="UniProtKB" id="P0CK64"/>
    </source>
</evidence>
<evidence type="ECO:0000250" key="2">
    <source>
        <dbReference type="UniProtKB" id="P0CK68"/>
    </source>
</evidence>
<evidence type="ECO:0000250" key="3">
    <source>
        <dbReference type="UniProtKB" id="P0DJW8"/>
    </source>
</evidence>
<evidence type="ECO:0000250" key="4">
    <source>
        <dbReference type="UniProtKB" id="P0DXO5"/>
    </source>
</evidence>
<evidence type="ECO:0000250" key="5">
    <source>
        <dbReference type="UniProtKB" id="P0DXO6"/>
    </source>
</evidence>
<evidence type="ECO:0000305" key="6"/>
<dbReference type="EMBL" id="CY008681">
    <property type="status" value="NOT_ANNOTATED_CDS"/>
    <property type="molecule type" value="Genomic_RNA"/>
</dbReference>
<dbReference type="SMR" id="P0DJT0"/>
<dbReference type="Proteomes" id="UP000009189">
    <property type="component" value="Genome"/>
</dbReference>
<dbReference type="GO" id="GO:0003723">
    <property type="term" value="F:RNA binding"/>
    <property type="evidence" value="ECO:0007669"/>
    <property type="project" value="InterPro"/>
</dbReference>
<dbReference type="GO" id="GO:0039694">
    <property type="term" value="P:viral RNA genome replication"/>
    <property type="evidence" value="ECO:0007669"/>
    <property type="project" value="InterPro"/>
</dbReference>
<dbReference type="GO" id="GO:0075523">
    <property type="term" value="P:viral translational frameshifting"/>
    <property type="evidence" value="ECO:0007669"/>
    <property type="project" value="UniProtKB-KW"/>
</dbReference>
<dbReference type="FunFam" id="3.40.91.90:FF:000001">
    <property type="entry name" value="Polymerase acidic protein"/>
    <property type="match status" value="1"/>
</dbReference>
<dbReference type="Gene3D" id="3.40.91.90">
    <property type="entry name" value="Influenza RNA-dependent RNA polymerase subunit PA, endonuclease domain"/>
    <property type="match status" value="1"/>
</dbReference>
<dbReference type="InterPro" id="IPR001009">
    <property type="entry name" value="PA/PA-X"/>
</dbReference>
<dbReference type="InterPro" id="IPR038372">
    <property type="entry name" value="PA/PA-X_sf"/>
</dbReference>
<dbReference type="Pfam" id="PF00603">
    <property type="entry name" value="Flu_PA"/>
    <property type="match status" value="1"/>
</dbReference>
<sequence length="252" mass="29333">MEDFVRQCFNPMIVELAEKAMKEYGEDLKIETNKFAAICTHLEVCFMYSDFHFINEQGESIVVELDDPNALLKHRFEIIEGRDRTMAWTVVNSICNTTGAEKPKFLPDLYDYKENRFIEIGVTRREVHIYYLEKANKIKSENTHIHIFSFTGEEMATKADYTLDEESRARIKTRLFTIRQEMANRGLWDSFVSPKEAKKQLKKDLKSQELCAGLPTKVSRRTSPALRILEPMWMGSNRTAALRASFLKCPKK</sequence>
<protein>
    <recommendedName>
        <fullName>Protein PA-X</fullName>
    </recommendedName>
</protein>
<keyword id="KW-1132">Decay of host mRNAs by virus</keyword>
<keyword id="KW-1262">Eukaryotic host gene expression shutoff by virus</keyword>
<keyword id="KW-1035">Host cytoplasm</keyword>
<keyword id="KW-1190">Host gene expression shutoff by virus</keyword>
<keyword id="KW-1192">Host mRNA suppression by virus</keyword>
<keyword id="KW-1048">Host nucleus</keyword>
<keyword id="KW-0945">Host-virus interaction</keyword>
<keyword id="KW-0688">Ribosomal frameshifting</keyword>